<gene>
    <name evidence="8" type="primary">dock11</name>
    <name type="ORF">si:ch211-150g2.3</name>
</gene>
<keyword id="KW-0344">Guanine-nucleotide releasing factor</keyword>
<keyword id="KW-1185">Reference proteome</keyword>
<sequence length="2067" mass="236124">MSEVRKFTKRLSKPGTAAELRQSVSEAVRTSIAVEQPKIIEPLDYENVVFQRKAQIHSDPQRDLLLWPADDVSEAHIDRHRRTINPSVPQNAENEAKSLFAKECIKMYNTNWHVINYNYEAYSGDFRMLPCKGMKTEKLPSQVFEVDEGEEDSSSLCSQRGGVMKQGWLQKANINSSLSVSMKVFKRRYFYLSQLPDGSYILNSYKDEKNYKESKGSIYLDSCIDVVPCPKMRRNGFELKMQERYSHYLAADSEAEMEDWVNTIKQALLSTMEDRRNGSETSEGSLDDDSSSQGKPESITESFGRSLHPELMKYARETDQLSKMSRNEGRQKIFSLDPEVQRLDFSGIEPDVKPFEERFGRRIMVSCHNLTFNLQGCVSEKNDGVLTNVEPFFISLALFDLSKGCKISADFHVDLNPPCVREMIQTGSAGTPTEAGEDENDPVKMNGHGLPLLQRVAESLLHFPTQGIFSVTNPHADIFLLARVEKVLQNGITHCADPYIKPSDISKTVQKVLKTAKQTCQRLGQYRMPFAWAAKQVFKDSQGTLDTDGKFSPLYRQDSSKISTEDLIKLLTDLKKPEKNKLQIIPGQINITVECVPPDLSNSVTSSYIPVKPFADQCDSVSVEVEEFVPEEARFNHPFTIYNNHLYIYPQQLKYDSQKAFDKARNIAVCVQFKDSDEEGSSPLKCIYGKPGDPLFTTSAFAAVLHHNQSPEFYDEIKIELPVHIHEKHHILFTFYHISCDLGTKTTSKKREGVETLVGYSWTPLLKDGRIKSSDLQLPVSANLLAGYLCDKSQDIKKVFPYIKWVDNAKPLFKVRAYVASTIYTQDLHLHNFFQHCQLMRSTSQGNPAELIKYLKCLHAVETQVVIKFLPTVLVQLFEVLSMASKEGQDVAVNSTRVIIHIVSQCHEEGLEHYLRSFLKYVFRINNATSENSVTTHEVLATAVTVILKQTADINTCNKLLKYSWFFFETMARSMAQYLMDGNRMKMPRAQRFPESFQQALQCLLLSIMPHITIRYVEIPEEARCVNFSLACFIKRCLTFMNRGFAFSLINDYMCGFSLKDPKVLTEMKFDFLMTVCNHEHYIPLNLPMAFGRTKLQRVQDFISYAAECFGVVDQSLEYSLTEDYCKNHFLVGLLLREVADGLQACPEIRQLAVAVLKNLMIKHAMDDRYNAFKNQQARICLLYLPLFELLYQNLSQMNSPRQMCRNGLGLMYRDDLSVDSRRSSTIVDKEPSGSVTQNGLSRRGESRGSMYGDPGTPDINELHRRGSTMSTVPAAGRLGQYEIRGLLLCYLHIVRTLSDDTLTAYWSKVNPQDIMNFLSLLEICIIQFRYVGRRNISRSQEPWVSKLFSPERKSQTMPVLRGRASLMQAKLQQFSTMDTSLTLNMAGGPTEAEINHQSLLEGNTSTEVCLTVLDVLSLFTQSFKNQLLDSDGHNALMTKIFDTYLTLLKVGQSETAIKHIFASLRAFIVKFQVPLFKGRVVLCGSLCYEVLKCCMSKLSVLRGEASALLYLLMRHNFDYTKRKSFLRVHLQIIIAVSQLIADVALTGSSRFQESLSIINNFANSDKIMKTTTFPSEVKGLTMRIRTVLMATAQMREHEKDPEMLLDLQYSLARSYASTPELRRTWLDSMARAHSKNGDFSEAAMCNVHVAALMAEYLHRKKLFPSGLAAFKRTTQNIDEEGAMKEDIGMQDVYYTEDVLVEQLEVCVESLWKAERFELITHIARLIIPVYEKRHEFEKLRRLYDTLQRAYAKILEVMQSGRRLLGTYFRVAFFGQGFFEEEDGKEYIYKEPKLTTLPEISHRLLKLYGEKFGSENVKIIQDSNKVNQKDLDSKFAYIQVTYVKPFFDEKEMAERKTDFEKCHNIQRFVFETPFTLTGKKQGGVEEQCKRRTVLTTANTFPYVKKRIEVVGEKHTELKPIDVAIDEMKEKSSELAKLCSNQEVNMITLQLKLQGCVSVQVNAGPMAYARAFLDESKSGQSNKKVKDLKEIFRQFVNACSMALDINERLIKEDQYEYHEGLKANFKSMVKELSEIIHEQIFQEDMMRSLLQNSLHVFRAISGTSTDLS</sequence>
<organism>
    <name type="scientific">Danio rerio</name>
    <name type="common">Zebrafish</name>
    <name type="synonym">Brachydanio rerio</name>
    <dbReference type="NCBI Taxonomy" id="7955"/>
    <lineage>
        <taxon>Eukaryota</taxon>
        <taxon>Metazoa</taxon>
        <taxon>Chordata</taxon>
        <taxon>Craniata</taxon>
        <taxon>Vertebrata</taxon>
        <taxon>Euteleostomi</taxon>
        <taxon>Actinopterygii</taxon>
        <taxon>Neopterygii</taxon>
        <taxon>Teleostei</taxon>
        <taxon>Ostariophysi</taxon>
        <taxon>Cypriniformes</taxon>
        <taxon>Danionidae</taxon>
        <taxon>Danioninae</taxon>
        <taxon>Danio</taxon>
    </lineage>
</organism>
<reference key="1">
    <citation type="journal article" date="2013" name="Nature">
        <title>The zebrafish reference genome sequence and its relationship to the human genome.</title>
        <authorList>
            <person name="Howe K."/>
            <person name="Clark M.D."/>
            <person name="Torroja C.F."/>
            <person name="Torrance J."/>
            <person name="Berthelot C."/>
            <person name="Muffato M."/>
            <person name="Collins J.E."/>
            <person name="Humphray S."/>
            <person name="McLaren K."/>
            <person name="Matthews L."/>
            <person name="McLaren S."/>
            <person name="Sealy I."/>
            <person name="Caccamo M."/>
            <person name="Churcher C."/>
            <person name="Scott C."/>
            <person name="Barrett J.C."/>
            <person name="Koch R."/>
            <person name="Rauch G.J."/>
            <person name="White S."/>
            <person name="Chow W."/>
            <person name="Kilian B."/>
            <person name="Quintais L.T."/>
            <person name="Guerra-Assuncao J.A."/>
            <person name="Zhou Y."/>
            <person name="Gu Y."/>
            <person name="Yen J."/>
            <person name="Vogel J.H."/>
            <person name="Eyre T."/>
            <person name="Redmond S."/>
            <person name="Banerjee R."/>
            <person name="Chi J."/>
            <person name="Fu B."/>
            <person name="Langley E."/>
            <person name="Maguire S.F."/>
            <person name="Laird G.K."/>
            <person name="Lloyd D."/>
            <person name="Kenyon E."/>
            <person name="Donaldson S."/>
            <person name="Sehra H."/>
            <person name="Almeida-King J."/>
            <person name="Loveland J."/>
            <person name="Trevanion S."/>
            <person name="Jones M."/>
            <person name="Quail M."/>
            <person name="Willey D."/>
            <person name="Hunt A."/>
            <person name="Burton J."/>
            <person name="Sims S."/>
            <person name="McLay K."/>
            <person name="Plumb B."/>
            <person name="Davis J."/>
            <person name="Clee C."/>
            <person name="Oliver K."/>
            <person name="Clark R."/>
            <person name="Riddle C."/>
            <person name="Elliot D."/>
            <person name="Threadgold G."/>
            <person name="Harden G."/>
            <person name="Ware D."/>
            <person name="Begum S."/>
            <person name="Mortimore B."/>
            <person name="Kerry G."/>
            <person name="Heath P."/>
            <person name="Phillimore B."/>
            <person name="Tracey A."/>
            <person name="Corby N."/>
            <person name="Dunn M."/>
            <person name="Johnson C."/>
            <person name="Wood J."/>
            <person name="Clark S."/>
            <person name="Pelan S."/>
            <person name="Griffiths G."/>
            <person name="Smith M."/>
            <person name="Glithero R."/>
            <person name="Howden P."/>
            <person name="Barker N."/>
            <person name="Lloyd C."/>
            <person name="Stevens C."/>
            <person name="Harley J."/>
            <person name="Holt K."/>
            <person name="Panagiotidis G."/>
            <person name="Lovell J."/>
            <person name="Beasley H."/>
            <person name="Henderson C."/>
            <person name="Gordon D."/>
            <person name="Auger K."/>
            <person name="Wright D."/>
            <person name="Collins J."/>
            <person name="Raisen C."/>
            <person name="Dyer L."/>
            <person name="Leung K."/>
            <person name="Robertson L."/>
            <person name="Ambridge K."/>
            <person name="Leongamornlert D."/>
            <person name="McGuire S."/>
            <person name="Gilderthorp R."/>
            <person name="Griffiths C."/>
            <person name="Manthravadi D."/>
            <person name="Nichol S."/>
            <person name="Barker G."/>
            <person name="Whitehead S."/>
            <person name="Kay M."/>
            <person name="Brown J."/>
            <person name="Murnane C."/>
            <person name="Gray E."/>
            <person name="Humphries M."/>
            <person name="Sycamore N."/>
            <person name="Barker D."/>
            <person name="Saunders D."/>
            <person name="Wallis J."/>
            <person name="Babbage A."/>
            <person name="Hammond S."/>
            <person name="Mashreghi-Mohammadi M."/>
            <person name="Barr L."/>
            <person name="Martin S."/>
            <person name="Wray P."/>
            <person name="Ellington A."/>
            <person name="Matthews N."/>
            <person name="Ellwood M."/>
            <person name="Woodmansey R."/>
            <person name="Clark G."/>
            <person name="Cooper J."/>
            <person name="Tromans A."/>
            <person name="Grafham D."/>
            <person name="Skuce C."/>
            <person name="Pandian R."/>
            <person name="Andrews R."/>
            <person name="Harrison E."/>
            <person name="Kimberley A."/>
            <person name="Garnett J."/>
            <person name="Fosker N."/>
            <person name="Hall R."/>
            <person name="Garner P."/>
            <person name="Kelly D."/>
            <person name="Bird C."/>
            <person name="Palmer S."/>
            <person name="Gehring I."/>
            <person name="Berger A."/>
            <person name="Dooley C.M."/>
            <person name="Ersan-Urun Z."/>
            <person name="Eser C."/>
            <person name="Geiger H."/>
            <person name="Geisler M."/>
            <person name="Karotki L."/>
            <person name="Kirn A."/>
            <person name="Konantz J."/>
            <person name="Konantz M."/>
            <person name="Oberlander M."/>
            <person name="Rudolph-Geiger S."/>
            <person name="Teucke M."/>
            <person name="Lanz C."/>
            <person name="Raddatz G."/>
            <person name="Osoegawa K."/>
            <person name="Zhu B."/>
            <person name="Rapp A."/>
            <person name="Widaa S."/>
            <person name="Langford C."/>
            <person name="Yang F."/>
            <person name="Schuster S.C."/>
            <person name="Carter N.P."/>
            <person name="Harrow J."/>
            <person name="Ning Z."/>
            <person name="Herrero J."/>
            <person name="Searle S.M."/>
            <person name="Enright A."/>
            <person name="Geisler R."/>
            <person name="Plasterk R.H."/>
            <person name="Lee C."/>
            <person name="Westerfield M."/>
            <person name="de Jong P.J."/>
            <person name="Zon L.I."/>
            <person name="Postlethwait J.H."/>
            <person name="Nusslein-Volhard C."/>
            <person name="Hubbard T.J."/>
            <person name="Roest Crollius H."/>
            <person name="Rogers J."/>
            <person name="Stemple D.L."/>
        </authorList>
    </citation>
    <scope>NUCLEOTIDE SEQUENCE [LARGE SCALE GENOMIC DNA]</scope>
    <source>
        <strain>Tuebingen</strain>
    </source>
</reference>
<reference key="2">
    <citation type="journal article" date="2023" name="N. Engl. J. Med.">
        <title>Systemic Inflammation and Normocytic Anemia in DOCK11 Deficiency.</title>
        <authorList>
            <person name="Block J."/>
            <person name="Rashkova C."/>
            <person name="Castanon I."/>
            <person name="Zoghi S."/>
            <person name="Platon J."/>
            <person name="Ardy R.C."/>
            <person name="Fujiwara M."/>
            <person name="Chaves B."/>
            <person name="Schoppmeyer R."/>
            <person name="van der Made C.I."/>
            <person name="Jimenez Heredia R."/>
            <person name="Harms F.L."/>
            <person name="Alavi S."/>
            <person name="Alsina L."/>
            <person name="Sanchez Moreno P."/>
            <person name="Avila Polo R."/>
            <person name="Cabrera-Perez R."/>
            <person name="Kostel Bal S."/>
            <person name="Pfajfer L."/>
            <person name="Ransmayr B."/>
            <person name="Mautner A.K."/>
            <person name="Kondo R."/>
            <person name="Tinnacher A."/>
            <person name="Caldera M."/>
            <person name="Schuster M."/>
            <person name="Dominguez Conde C."/>
            <person name="Platzer R."/>
            <person name="Salzer E."/>
            <person name="Boyer T."/>
            <person name="Brunner H.G."/>
            <person name="Nooitgedagt-Frons J.E."/>
            <person name="Iglesias E."/>
            <person name="Deya-Martinez A."/>
            <person name="Camacho-Lovillo M."/>
            <person name="Menche J."/>
            <person name="Bock C."/>
            <person name="Huppa J.B."/>
            <person name="Pickl W.F."/>
            <person name="Distel M."/>
            <person name="Yoder J.A."/>
            <person name="Traver D."/>
            <person name="Engelhardt K.R."/>
            <person name="Linden T."/>
            <person name="Kager L."/>
            <person name="Hannich J.T."/>
            <person name="Hoischen A."/>
            <person name="Hambleton S."/>
            <person name="Illsinger S."/>
            <person name="Da Costa L."/>
            <person name="Kutsche K."/>
            <person name="Chavoshzadeh Z."/>
            <person name="van Buul J.D."/>
            <person name="Anton J."/>
            <person name="Calzada-Hernandez J."/>
            <person name="Neth O."/>
            <person name="Viaud J."/>
            <person name="Nishikimi A."/>
            <person name="Dupre L."/>
            <person name="Boztug K."/>
        </authorList>
    </citation>
    <scope>DISRUPTION PHENOTYPE</scope>
</reference>
<proteinExistence type="inferred from homology"/>
<name>DOC11_DANRE</name>
<dbReference type="EMBL" id="AL772340">
    <property type="status" value="NOT_ANNOTATED_CDS"/>
    <property type="molecule type" value="Genomic_DNA"/>
</dbReference>
<dbReference type="EMBL" id="CU571321">
    <property type="status" value="NOT_ANNOTATED_CDS"/>
    <property type="molecule type" value="Genomic_DNA"/>
</dbReference>
<dbReference type="RefSeq" id="XP_009301359.1">
    <property type="nucleotide sequence ID" value="XM_009303084.4"/>
</dbReference>
<dbReference type="SMR" id="B0R034"/>
<dbReference type="FunCoup" id="B0R034">
    <property type="interactions" value="1751"/>
</dbReference>
<dbReference type="STRING" id="7955.ENSDARP00000119904"/>
<dbReference type="PeptideAtlas" id="B0R034"/>
<dbReference type="Ensembl" id="ENSDART00000137575">
    <property type="protein sequence ID" value="ENSDARP00000119904"/>
    <property type="gene ID" value="ENSDARG00000062485"/>
</dbReference>
<dbReference type="GeneID" id="799686"/>
<dbReference type="AGR" id="ZFIN:ZDB-GENE-060503-196"/>
<dbReference type="CTD" id="139818"/>
<dbReference type="ZFIN" id="ZDB-GENE-060503-196">
    <property type="gene designation" value="dock11"/>
</dbReference>
<dbReference type="HOGENOM" id="CLU_000624_3_0_1"/>
<dbReference type="OMA" id="IAVCMEF"/>
<dbReference type="OrthoDB" id="47328at2759"/>
<dbReference type="Proteomes" id="UP000000437">
    <property type="component" value="Chromosome 7"/>
</dbReference>
<dbReference type="Bgee" id="ENSDARG00000062485">
    <property type="expression patterns" value="Expressed in mature ovarian follicle and 18 other cell types or tissues"/>
</dbReference>
<dbReference type="ExpressionAtlas" id="B0R034">
    <property type="expression patterns" value="baseline and differential"/>
</dbReference>
<dbReference type="GO" id="GO:0005085">
    <property type="term" value="F:guanyl-nucleotide exchange factor activity"/>
    <property type="evidence" value="ECO:0000318"/>
    <property type="project" value="GO_Central"/>
</dbReference>
<dbReference type="GO" id="GO:0051491">
    <property type="term" value="P:positive regulation of filopodium assembly"/>
    <property type="evidence" value="ECO:0000318"/>
    <property type="project" value="GO_Central"/>
</dbReference>
<dbReference type="GO" id="GO:0035023">
    <property type="term" value="P:regulation of Rho protein signal transduction"/>
    <property type="evidence" value="ECO:0000318"/>
    <property type="project" value="GO_Central"/>
</dbReference>
<dbReference type="GO" id="GO:0007264">
    <property type="term" value="P:small GTPase-mediated signal transduction"/>
    <property type="evidence" value="ECO:0007669"/>
    <property type="project" value="InterPro"/>
</dbReference>
<dbReference type="CDD" id="cd08697">
    <property type="entry name" value="C2_Dock-D"/>
    <property type="match status" value="1"/>
</dbReference>
<dbReference type="CDD" id="cd11700">
    <property type="entry name" value="DHR2_DOCK11"/>
    <property type="match status" value="1"/>
</dbReference>
<dbReference type="CDD" id="cd13267">
    <property type="entry name" value="PH_DOCK-D"/>
    <property type="match status" value="1"/>
</dbReference>
<dbReference type="FunFam" id="1.20.58.740:FF:000001">
    <property type="entry name" value="dedicator of cytokinesis protein 9 isoform X1"/>
    <property type="match status" value="1"/>
</dbReference>
<dbReference type="FunFam" id="1.25.40.410:FF:000001">
    <property type="entry name" value="dedicator of cytokinesis protein 9 isoform X2"/>
    <property type="match status" value="1"/>
</dbReference>
<dbReference type="Gene3D" id="1.20.58.740">
    <property type="match status" value="1"/>
</dbReference>
<dbReference type="Gene3D" id="1.25.40.410">
    <property type="match status" value="1"/>
</dbReference>
<dbReference type="Gene3D" id="2.60.40.150">
    <property type="entry name" value="C2 domain"/>
    <property type="match status" value="1"/>
</dbReference>
<dbReference type="Gene3D" id="2.30.29.30">
    <property type="entry name" value="Pleckstrin-homology domain (PH domain)/Phosphotyrosine-binding domain (PTB)"/>
    <property type="match status" value="1"/>
</dbReference>
<dbReference type="InterPro" id="IPR037809">
    <property type="entry name" value="C2_Dock-D"/>
</dbReference>
<dbReference type="InterPro" id="IPR027007">
    <property type="entry name" value="C2_DOCK-type_domain"/>
</dbReference>
<dbReference type="InterPro" id="IPR035892">
    <property type="entry name" value="C2_domain_sf"/>
</dbReference>
<dbReference type="InterPro" id="IPR026791">
    <property type="entry name" value="DOCK"/>
</dbReference>
<dbReference type="InterPro" id="IPR021816">
    <property type="entry name" value="DOCK_C/D_N"/>
</dbReference>
<dbReference type="InterPro" id="IPR043161">
    <property type="entry name" value="DOCK_C_lobe_A"/>
</dbReference>
<dbReference type="InterPro" id="IPR043162">
    <property type="entry name" value="DOCK_C_lobe_C"/>
</dbReference>
<dbReference type="InterPro" id="IPR027357">
    <property type="entry name" value="DOCKER_dom"/>
</dbReference>
<dbReference type="InterPro" id="IPR046769">
    <property type="entry name" value="DOCKER_Lobe_A"/>
</dbReference>
<dbReference type="InterPro" id="IPR046770">
    <property type="entry name" value="DOCKER_Lobe_B"/>
</dbReference>
<dbReference type="InterPro" id="IPR046773">
    <property type="entry name" value="DOCKER_Lobe_C"/>
</dbReference>
<dbReference type="InterPro" id="IPR011993">
    <property type="entry name" value="PH-like_dom_sf"/>
</dbReference>
<dbReference type="InterPro" id="IPR001849">
    <property type="entry name" value="PH_domain"/>
</dbReference>
<dbReference type="PANTHER" id="PTHR23317">
    <property type="entry name" value="DEDICATOR OF CYTOKINESIS DOCK"/>
    <property type="match status" value="1"/>
</dbReference>
<dbReference type="PANTHER" id="PTHR23317:SF81">
    <property type="entry name" value="DEDICATOR OF CYTOKINESIS PROTEIN 11"/>
    <property type="match status" value="1"/>
</dbReference>
<dbReference type="Pfam" id="PF06920">
    <property type="entry name" value="DHR-2_Lobe_A"/>
    <property type="match status" value="1"/>
</dbReference>
<dbReference type="Pfam" id="PF20422">
    <property type="entry name" value="DHR-2_Lobe_B"/>
    <property type="match status" value="1"/>
</dbReference>
<dbReference type="Pfam" id="PF20421">
    <property type="entry name" value="DHR-2_Lobe_C"/>
    <property type="match status" value="1"/>
</dbReference>
<dbReference type="Pfam" id="PF14429">
    <property type="entry name" value="DOCK-C2"/>
    <property type="match status" value="1"/>
</dbReference>
<dbReference type="Pfam" id="PF11878">
    <property type="entry name" value="DOCK_C-D_N"/>
    <property type="match status" value="1"/>
</dbReference>
<dbReference type="Pfam" id="PF00169">
    <property type="entry name" value="PH"/>
    <property type="match status" value="1"/>
</dbReference>
<dbReference type="SMART" id="SM00233">
    <property type="entry name" value="PH"/>
    <property type="match status" value="1"/>
</dbReference>
<dbReference type="SUPFAM" id="SSF50729">
    <property type="entry name" value="PH domain-like"/>
    <property type="match status" value="1"/>
</dbReference>
<dbReference type="PROSITE" id="PS51650">
    <property type="entry name" value="C2_DOCK"/>
    <property type="match status" value="1"/>
</dbReference>
<dbReference type="PROSITE" id="PS51651">
    <property type="entry name" value="DOCKER"/>
    <property type="match status" value="1"/>
</dbReference>
<dbReference type="PROSITE" id="PS50003">
    <property type="entry name" value="PH_DOMAIN"/>
    <property type="match status" value="1"/>
</dbReference>
<comment type="function">
    <text evidence="2">Guanine nucleotide-exchange factor (GEF) that activates CDC42 by exchanging bound GDP for free GTP.</text>
</comment>
<comment type="domain">
    <text evidence="1">The DOCKER domain is necessary for the GEF activity.</text>
</comment>
<comment type="disruption phenotype">
    <text evidence="7">Knockout embryos display anemia, and accumulation of blood cells in the posterior part of the body. Decreased numbers of erythroid cells, abnormal red cell morphology, and impaired erythroid maturation and differentiation are noticed. In contrast, the percentage of endothelial cells is similar in knockout embryos and controls.</text>
</comment>
<comment type="similarity">
    <text evidence="4">Belongs to the DOCK family.</text>
</comment>
<protein>
    <recommendedName>
        <fullName evidence="9">Dedicator of cytokinesis protein 11</fullName>
    </recommendedName>
</protein>
<evidence type="ECO:0000250" key="1">
    <source>
        <dbReference type="UniProtKB" id="A2AF47"/>
    </source>
</evidence>
<evidence type="ECO:0000250" key="2">
    <source>
        <dbReference type="UniProtKB" id="Q5JSL3"/>
    </source>
</evidence>
<evidence type="ECO:0000255" key="3">
    <source>
        <dbReference type="PROSITE-ProRule" id="PRU00145"/>
    </source>
</evidence>
<evidence type="ECO:0000255" key="4">
    <source>
        <dbReference type="PROSITE-ProRule" id="PRU00983"/>
    </source>
</evidence>
<evidence type="ECO:0000255" key="5">
    <source>
        <dbReference type="PROSITE-ProRule" id="PRU00984"/>
    </source>
</evidence>
<evidence type="ECO:0000256" key="6">
    <source>
        <dbReference type="SAM" id="MobiDB-lite"/>
    </source>
</evidence>
<evidence type="ECO:0000269" key="7">
    <source>
    </source>
</evidence>
<evidence type="ECO:0000303" key="8">
    <source>
    </source>
</evidence>
<evidence type="ECO:0000305" key="9">
    <source>
    </source>
</evidence>
<accession>B0R034</accession>
<accession>A0A8M3BAW6</accession>
<feature type="chain" id="PRO_0000460279" description="Dedicator of cytokinesis protein 11">
    <location>
        <begin position="1"/>
        <end position="2067"/>
    </location>
</feature>
<feature type="domain" description="PH" evidence="3">
    <location>
        <begin position="162"/>
        <end position="269"/>
    </location>
</feature>
<feature type="domain" description="C2 DOCK-type" evidence="4">
    <location>
        <begin position="643"/>
        <end position="820"/>
    </location>
</feature>
<feature type="domain" description="DOCKER" evidence="5">
    <location>
        <begin position="1614"/>
        <end position="2040"/>
    </location>
</feature>
<feature type="region of interest" description="Disordered" evidence="6">
    <location>
        <begin position="274"/>
        <end position="302"/>
    </location>
</feature>
<feature type="region of interest" description="Disordered" evidence="6">
    <location>
        <begin position="1224"/>
        <end position="1267"/>
    </location>
</feature>
<feature type="compositionally biased region" description="Polar residues" evidence="6">
    <location>
        <begin position="291"/>
        <end position="302"/>
    </location>
</feature>